<comment type="similarity">
    <text evidence="1">Belongs to the GEM family.</text>
</comment>
<comment type="sequence caution" evidence="1">
    <conflict type="erroneous initiation">
        <sequence resource="EMBL-CDS" id="BAC43217"/>
    </conflict>
</comment>
<dbReference type="EMBL" id="AL392174">
    <property type="protein sequence ID" value="CAC08335.1"/>
    <property type="molecule type" value="Genomic_DNA"/>
</dbReference>
<dbReference type="EMBL" id="CP002688">
    <property type="protein sequence ID" value="AED91288.1"/>
    <property type="molecule type" value="Genomic_DNA"/>
</dbReference>
<dbReference type="EMBL" id="AY085900">
    <property type="protein sequence ID" value="AAM63112.1"/>
    <property type="molecule type" value="mRNA"/>
</dbReference>
<dbReference type="EMBL" id="AK118619">
    <property type="protein sequence ID" value="BAC43217.1"/>
    <property type="status" value="ALT_INIT"/>
    <property type="molecule type" value="mRNA"/>
</dbReference>
<dbReference type="EMBL" id="BT004668">
    <property type="protein sequence ID" value="AAO42914.1"/>
    <property type="molecule type" value="mRNA"/>
</dbReference>
<dbReference type="RefSeq" id="NP_196452.1">
    <property type="nucleotide sequence ID" value="NM_120919.4"/>
</dbReference>
<dbReference type="FunCoup" id="Q9FTA0">
    <property type="interactions" value="8"/>
</dbReference>
<dbReference type="STRING" id="3702.Q9FTA0"/>
<dbReference type="PaxDb" id="3702-AT5G08350.1"/>
<dbReference type="EnsemblPlants" id="AT5G08350.1">
    <property type="protein sequence ID" value="AT5G08350.1"/>
    <property type="gene ID" value="AT5G08350"/>
</dbReference>
<dbReference type="GeneID" id="830733"/>
<dbReference type="Gramene" id="AT5G08350.1">
    <property type="protein sequence ID" value="AT5G08350.1"/>
    <property type="gene ID" value="AT5G08350"/>
</dbReference>
<dbReference type="KEGG" id="ath:AT5G08350"/>
<dbReference type="Araport" id="AT5G08350"/>
<dbReference type="TAIR" id="AT5G08350"/>
<dbReference type="eggNOG" id="ENOG502QUKI">
    <property type="taxonomic scope" value="Eukaryota"/>
</dbReference>
<dbReference type="HOGENOM" id="CLU_063785_0_1_1"/>
<dbReference type="InParanoid" id="Q9FTA0"/>
<dbReference type="OMA" id="GFTNGAR"/>
<dbReference type="OrthoDB" id="1736712at2759"/>
<dbReference type="PhylomeDB" id="Q9FTA0"/>
<dbReference type="PRO" id="PR:Q9FTA0"/>
<dbReference type="Proteomes" id="UP000006548">
    <property type="component" value="Chromosome 5"/>
</dbReference>
<dbReference type="ExpressionAtlas" id="Q9FTA0">
    <property type="expression patterns" value="differential"/>
</dbReference>
<dbReference type="Gene3D" id="2.30.29.30">
    <property type="entry name" value="Pleckstrin-homology domain (PH domain)/Phosphotyrosine-binding domain (PTB)"/>
    <property type="match status" value="1"/>
</dbReference>
<dbReference type="InterPro" id="IPR037848">
    <property type="entry name" value="GEM-like"/>
</dbReference>
<dbReference type="InterPro" id="IPR004182">
    <property type="entry name" value="GRAM"/>
</dbReference>
<dbReference type="InterPro" id="IPR011993">
    <property type="entry name" value="PH-like_dom_sf"/>
</dbReference>
<dbReference type="PANTHER" id="PTHR31969">
    <property type="entry name" value="GEM-LIKE PROTEIN 2"/>
    <property type="match status" value="1"/>
</dbReference>
<dbReference type="Pfam" id="PF02893">
    <property type="entry name" value="GRAM"/>
    <property type="match status" value="1"/>
</dbReference>
<dbReference type="SMART" id="SM00568">
    <property type="entry name" value="GRAM"/>
    <property type="match status" value="1"/>
</dbReference>
<proteinExistence type="evidence at transcript level"/>
<keyword id="KW-1185">Reference proteome</keyword>
<sequence length="222" mass="25254">MNMSRVEQQVIRYPAAKATPVGYLPDPASFNKFRVPASSKKSEQSNVKSILKRKKTDGFTNGVRDQSKIRPKLTETVKRKLSLGARILQVGGLEKIFKRLFRVSEGEKLFKMYQCYLSTTAGPIAGLLFISSKKMAFCSERSIKVDSPQGDIIRVHYKVSIPLCKIDRVNQSQNTKKPSQKYLEVVTVDGFDFWFMGFLSYQKAFNCLEKALSLSFEDNKEQ</sequence>
<accession>Q9FTA0</accession>
<accession>Q8GWV3</accession>
<organism>
    <name type="scientific">Arabidopsis thaliana</name>
    <name type="common">Mouse-ear cress</name>
    <dbReference type="NCBI Taxonomy" id="3702"/>
    <lineage>
        <taxon>Eukaryota</taxon>
        <taxon>Viridiplantae</taxon>
        <taxon>Streptophyta</taxon>
        <taxon>Embryophyta</taxon>
        <taxon>Tracheophyta</taxon>
        <taxon>Spermatophyta</taxon>
        <taxon>Magnoliopsida</taxon>
        <taxon>eudicotyledons</taxon>
        <taxon>Gunneridae</taxon>
        <taxon>Pentapetalae</taxon>
        <taxon>rosids</taxon>
        <taxon>malvids</taxon>
        <taxon>Brassicales</taxon>
        <taxon>Brassicaceae</taxon>
        <taxon>Camelineae</taxon>
        <taxon>Arabidopsis</taxon>
    </lineage>
</organism>
<reference key="1">
    <citation type="journal article" date="2000" name="Nature">
        <title>Sequence and analysis of chromosome 5 of the plant Arabidopsis thaliana.</title>
        <authorList>
            <person name="Tabata S."/>
            <person name="Kaneko T."/>
            <person name="Nakamura Y."/>
            <person name="Kotani H."/>
            <person name="Kato T."/>
            <person name="Asamizu E."/>
            <person name="Miyajima N."/>
            <person name="Sasamoto S."/>
            <person name="Kimura T."/>
            <person name="Hosouchi T."/>
            <person name="Kawashima K."/>
            <person name="Kohara M."/>
            <person name="Matsumoto M."/>
            <person name="Matsuno A."/>
            <person name="Muraki A."/>
            <person name="Nakayama S."/>
            <person name="Nakazaki N."/>
            <person name="Naruo K."/>
            <person name="Okumura S."/>
            <person name="Shinpo S."/>
            <person name="Takeuchi C."/>
            <person name="Wada T."/>
            <person name="Watanabe A."/>
            <person name="Yamada M."/>
            <person name="Yasuda M."/>
            <person name="Sato S."/>
            <person name="de la Bastide M."/>
            <person name="Huang E."/>
            <person name="Spiegel L."/>
            <person name="Gnoj L."/>
            <person name="O'Shaughnessy A."/>
            <person name="Preston R."/>
            <person name="Habermann K."/>
            <person name="Murray J."/>
            <person name="Johnson D."/>
            <person name="Rohlfing T."/>
            <person name="Nelson J."/>
            <person name="Stoneking T."/>
            <person name="Pepin K."/>
            <person name="Spieth J."/>
            <person name="Sekhon M."/>
            <person name="Armstrong J."/>
            <person name="Becker M."/>
            <person name="Belter E."/>
            <person name="Cordum H."/>
            <person name="Cordes M."/>
            <person name="Courtney L."/>
            <person name="Courtney W."/>
            <person name="Dante M."/>
            <person name="Du H."/>
            <person name="Edwards J."/>
            <person name="Fryman J."/>
            <person name="Haakensen B."/>
            <person name="Lamar E."/>
            <person name="Latreille P."/>
            <person name="Leonard S."/>
            <person name="Meyer R."/>
            <person name="Mulvaney E."/>
            <person name="Ozersky P."/>
            <person name="Riley A."/>
            <person name="Strowmatt C."/>
            <person name="Wagner-McPherson C."/>
            <person name="Wollam A."/>
            <person name="Yoakum M."/>
            <person name="Bell M."/>
            <person name="Dedhia N."/>
            <person name="Parnell L."/>
            <person name="Shah R."/>
            <person name="Rodriguez M."/>
            <person name="Hoon See L."/>
            <person name="Vil D."/>
            <person name="Baker J."/>
            <person name="Kirchoff K."/>
            <person name="Toth K."/>
            <person name="King L."/>
            <person name="Bahret A."/>
            <person name="Miller B."/>
            <person name="Marra M.A."/>
            <person name="Martienssen R."/>
            <person name="McCombie W.R."/>
            <person name="Wilson R.K."/>
            <person name="Murphy G."/>
            <person name="Bancroft I."/>
            <person name="Volckaert G."/>
            <person name="Wambutt R."/>
            <person name="Duesterhoeft A."/>
            <person name="Stiekema W."/>
            <person name="Pohl T."/>
            <person name="Entian K.-D."/>
            <person name="Terryn N."/>
            <person name="Hartley N."/>
            <person name="Bent E."/>
            <person name="Johnson S."/>
            <person name="Langham S.-A."/>
            <person name="McCullagh B."/>
            <person name="Robben J."/>
            <person name="Grymonprez B."/>
            <person name="Zimmermann W."/>
            <person name="Ramsperger U."/>
            <person name="Wedler H."/>
            <person name="Balke K."/>
            <person name="Wedler E."/>
            <person name="Peters S."/>
            <person name="van Staveren M."/>
            <person name="Dirkse W."/>
            <person name="Mooijman P."/>
            <person name="Klein Lankhorst R."/>
            <person name="Weitzenegger T."/>
            <person name="Bothe G."/>
            <person name="Rose M."/>
            <person name="Hauf J."/>
            <person name="Berneiser S."/>
            <person name="Hempel S."/>
            <person name="Feldpausch M."/>
            <person name="Lamberth S."/>
            <person name="Villarroel R."/>
            <person name="Gielen J."/>
            <person name="Ardiles W."/>
            <person name="Bents O."/>
            <person name="Lemcke K."/>
            <person name="Kolesov G."/>
            <person name="Mayer K.F.X."/>
            <person name="Rudd S."/>
            <person name="Schoof H."/>
            <person name="Schueller C."/>
            <person name="Zaccaria P."/>
            <person name="Mewes H.-W."/>
            <person name="Bevan M."/>
            <person name="Fransz P.F."/>
        </authorList>
    </citation>
    <scope>NUCLEOTIDE SEQUENCE [LARGE SCALE GENOMIC DNA]</scope>
    <source>
        <strain>cv. Columbia</strain>
    </source>
</reference>
<reference key="2">
    <citation type="journal article" date="2017" name="Plant J.">
        <title>Araport11: a complete reannotation of the Arabidopsis thaliana reference genome.</title>
        <authorList>
            <person name="Cheng C.Y."/>
            <person name="Krishnakumar V."/>
            <person name="Chan A.P."/>
            <person name="Thibaud-Nissen F."/>
            <person name="Schobel S."/>
            <person name="Town C.D."/>
        </authorList>
    </citation>
    <scope>GENOME REANNOTATION</scope>
    <source>
        <strain>cv. Columbia</strain>
    </source>
</reference>
<reference key="3">
    <citation type="submission" date="2002-03" db="EMBL/GenBank/DDBJ databases">
        <title>Full-length cDNA from Arabidopsis thaliana.</title>
        <authorList>
            <person name="Brover V.V."/>
            <person name="Troukhan M.E."/>
            <person name="Alexandrov N.A."/>
            <person name="Lu Y.-P."/>
            <person name="Flavell R.B."/>
            <person name="Feldmann K.A."/>
        </authorList>
    </citation>
    <scope>NUCLEOTIDE SEQUENCE [LARGE SCALE MRNA]</scope>
</reference>
<reference key="4">
    <citation type="journal article" date="2002" name="Science">
        <title>Functional annotation of a full-length Arabidopsis cDNA collection.</title>
        <authorList>
            <person name="Seki M."/>
            <person name="Narusaka M."/>
            <person name="Kamiya A."/>
            <person name="Ishida J."/>
            <person name="Satou M."/>
            <person name="Sakurai T."/>
            <person name="Nakajima M."/>
            <person name="Enju A."/>
            <person name="Akiyama K."/>
            <person name="Oono Y."/>
            <person name="Muramatsu M."/>
            <person name="Hayashizaki Y."/>
            <person name="Kawai J."/>
            <person name="Carninci P."/>
            <person name="Itoh M."/>
            <person name="Ishii Y."/>
            <person name="Arakawa T."/>
            <person name="Shibata K."/>
            <person name="Shinagawa A."/>
            <person name="Shinozaki K."/>
        </authorList>
    </citation>
    <scope>NUCLEOTIDE SEQUENCE [LARGE SCALE MRNA] OF 118-222</scope>
    <source>
        <strain>cv. Columbia</strain>
    </source>
</reference>
<reference key="5">
    <citation type="journal article" date="2003" name="Science">
        <title>Empirical analysis of transcriptional activity in the Arabidopsis genome.</title>
        <authorList>
            <person name="Yamada K."/>
            <person name="Lim J."/>
            <person name="Dale J.M."/>
            <person name="Chen H."/>
            <person name="Shinn P."/>
            <person name="Palm C.J."/>
            <person name="Southwick A.M."/>
            <person name="Wu H.C."/>
            <person name="Kim C.J."/>
            <person name="Nguyen M."/>
            <person name="Pham P.K."/>
            <person name="Cheuk R.F."/>
            <person name="Karlin-Newmann G."/>
            <person name="Liu S.X."/>
            <person name="Lam B."/>
            <person name="Sakano H."/>
            <person name="Wu T."/>
            <person name="Yu G."/>
            <person name="Miranda M."/>
            <person name="Quach H.L."/>
            <person name="Tripp M."/>
            <person name="Chang C.H."/>
            <person name="Lee J.M."/>
            <person name="Toriumi M.J."/>
            <person name="Chan M.M."/>
            <person name="Tang C.C."/>
            <person name="Onodera C.S."/>
            <person name="Deng J.M."/>
            <person name="Akiyama K."/>
            <person name="Ansari Y."/>
            <person name="Arakawa T."/>
            <person name="Banh J."/>
            <person name="Banno F."/>
            <person name="Bowser L."/>
            <person name="Brooks S.Y."/>
            <person name="Carninci P."/>
            <person name="Chao Q."/>
            <person name="Choy N."/>
            <person name="Enju A."/>
            <person name="Goldsmith A.D."/>
            <person name="Gurjal M."/>
            <person name="Hansen N.F."/>
            <person name="Hayashizaki Y."/>
            <person name="Johnson-Hopson C."/>
            <person name="Hsuan V.W."/>
            <person name="Iida K."/>
            <person name="Karnes M."/>
            <person name="Khan S."/>
            <person name="Koesema E."/>
            <person name="Ishida J."/>
            <person name="Jiang P.X."/>
            <person name="Jones T."/>
            <person name="Kawai J."/>
            <person name="Kamiya A."/>
            <person name="Meyers C."/>
            <person name="Nakajima M."/>
            <person name="Narusaka M."/>
            <person name="Seki M."/>
            <person name="Sakurai T."/>
            <person name="Satou M."/>
            <person name="Tamse R."/>
            <person name="Vaysberg M."/>
            <person name="Wallender E.K."/>
            <person name="Wong C."/>
            <person name="Yamamura Y."/>
            <person name="Yuan S."/>
            <person name="Shinozaki K."/>
            <person name="Davis R.W."/>
            <person name="Theologis A."/>
            <person name="Ecker J.R."/>
        </authorList>
    </citation>
    <scope>NUCLEOTIDE SEQUENCE [LARGE SCALE MRNA] OF 135-222</scope>
    <source>
        <strain>cv. Columbia</strain>
    </source>
</reference>
<evidence type="ECO:0000305" key="1"/>
<protein>
    <recommendedName>
        <fullName>GEM-like protein 4</fullName>
    </recommendedName>
</protein>
<feature type="chain" id="PRO_0000311668" description="GEM-like protein 4">
    <location>
        <begin position="1"/>
        <end position="222"/>
    </location>
</feature>
<feature type="domain" description="GRAM">
    <location>
        <begin position="95"/>
        <end position="173"/>
    </location>
</feature>
<gene>
    <name type="ordered locus">At5g08350</name>
    <name type="ORF">F8L15_80</name>
</gene>
<name>GEML4_ARATH</name>